<comment type="function">
    <text evidence="3">Probable transcription factor that regulates organogenesis during transition from the vegetative to the reproductive phase. Regulates the expression of CYP78A11/PLA1, HD3A and MADS1 during reproductive development in rice. May act upstream of CYP78A11/PLA1 during panicle development. Acts independently of the photoperiodic and gibberellin signaling pathways.</text>
</comment>
<comment type="tissue specificity">
    <text evidence="3">Highly expressed in inflorescences. Expressed in vascular bundles of root stele within the elongation zones, of elongating upper internodes and of the junctions of leaf blades and sheaths.</text>
</comment>
<comment type="developmental stage">
    <text evidence="3">Expressed predominantly in the bract primordia during panicle development.</text>
</comment>
<comment type="disruption phenotype">
    <text evidence="3">Reduced plant size. Delayed transition from vegetative to reproductive growth. Reduced panicle size with overgrown bracts at their bases.</text>
</comment>
<comment type="similarity">
    <text evidence="6">Belongs to the type IV zinc-finger family. Class B subfamily.</text>
</comment>
<comment type="sequence caution" evidence="6">
    <conflict type="erroneous gene model prediction">
        <sequence resource="EMBL-CDS" id="AAD39588"/>
    </conflict>
</comment>
<name>GAT15_ORYSJ</name>
<accession>Q6L5E5</accession>
<accession>Q9XHW4</accession>
<reference key="1">
    <citation type="journal article" date="2009" name="Cell Res.">
        <title>NECK LEAF 1, a GATA type transcription factor, modulates organogenesis by regulating the expression of multiple regulatory genes during reproductive development in rice.</title>
        <authorList>
            <person name="Wang L."/>
            <person name="Yin H."/>
            <person name="Qian Q."/>
            <person name="Yang J."/>
            <person name="Huang C."/>
            <person name="Hu X."/>
            <person name="Luo D."/>
        </authorList>
    </citation>
    <scope>NUCLEOTIDE SEQUENCE [MRNA]</scope>
    <scope>FUNCTION</scope>
    <scope>TISSUE SPECIFICITY</scope>
    <scope>DEVELOPMENTAL STAGE</scope>
    <scope>MUTAGENESIS OF ARG-182</scope>
    <scope>DISRUPTION PHENOTYPE</scope>
    <source>
        <strain>cv. Zhonghua 11</strain>
    </source>
</reference>
<reference key="2">
    <citation type="journal article" date="2005" name="Mol. Genet. Genomics">
        <title>A fine physical map of the rice chromosome 5.</title>
        <authorList>
            <person name="Cheng C.-H."/>
            <person name="Chung M.C."/>
            <person name="Liu S.-M."/>
            <person name="Chen S.-K."/>
            <person name="Kao F.Y."/>
            <person name="Lin S.-J."/>
            <person name="Hsiao S.-H."/>
            <person name="Tseng I.C."/>
            <person name="Hsing Y.-I.C."/>
            <person name="Wu H.-P."/>
            <person name="Chen C.-S."/>
            <person name="Shaw J.-F."/>
            <person name="Wu J."/>
            <person name="Matsumoto T."/>
            <person name="Sasaki T."/>
            <person name="Chen H.-C."/>
            <person name="Chow T.-Y."/>
        </authorList>
    </citation>
    <scope>NUCLEOTIDE SEQUENCE [LARGE SCALE GENOMIC DNA]</scope>
    <source>
        <strain>cv. Nipponbare</strain>
    </source>
</reference>
<reference key="3">
    <citation type="journal article" date="2005" name="Nature">
        <title>The map-based sequence of the rice genome.</title>
        <authorList>
            <consortium name="International rice genome sequencing project (IRGSP)"/>
        </authorList>
    </citation>
    <scope>NUCLEOTIDE SEQUENCE [LARGE SCALE GENOMIC DNA]</scope>
    <source>
        <strain>cv. Nipponbare</strain>
    </source>
</reference>
<reference key="4">
    <citation type="journal article" date="2008" name="Nucleic Acids Res.">
        <title>The rice annotation project database (RAP-DB): 2008 update.</title>
        <authorList>
            <consortium name="The rice annotation project (RAP)"/>
        </authorList>
    </citation>
    <scope>GENOME REANNOTATION</scope>
    <source>
        <strain>cv. Nipponbare</strain>
    </source>
</reference>
<reference key="5">
    <citation type="journal article" date="2013" name="Rice">
        <title>Improvement of the Oryza sativa Nipponbare reference genome using next generation sequence and optical map data.</title>
        <authorList>
            <person name="Kawahara Y."/>
            <person name="de la Bastide M."/>
            <person name="Hamilton J.P."/>
            <person name="Kanamori H."/>
            <person name="McCombie W.R."/>
            <person name="Ouyang S."/>
            <person name="Schwartz D.C."/>
            <person name="Tanaka T."/>
            <person name="Wu J."/>
            <person name="Zhou S."/>
            <person name="Childs K.L."/>
            <person name="Davidson R.M."/>
            <person name="Lin H."/>
            <person name="Quesada-Ocampo L."/>
            <person name="Vaillancourt B."/>
            <person name="Sakai H."/>
            <person name="Lee S.S."/>
            <person name="Kim J."/>
            <person name="Numa H."/>
            <person name="Itoh T."/>
            <person name="Buell C.R."/>
            <person name="Matsumoto T."/>
        </authorList>
    </citation>
    <scope>GENOME REANNOTATION</scope>
    <source>
        <strain>cv. Nipponbare</strain>
    </source>
</reference>
<reference key="6">
    <citation type="journal article" date="2005" name="PLoS Biol.">
        <title>The genomes of Oryza sativa: a history of duplications.</title>
        <authorList>
            <person name="Yu J."/>
            <person name="Wang J."/>
            <person name="Lin W."/>
            <person name="Li S."/>
            <person name="Li H."/>
            <person name="Zhou J."/>
            <person name="Ni P."/>
            <person name="Dong W."/>
            <person name="Hu S."/>
            <person name="Zeng C."/>
            <person name="Zhang J."/>
            <person name="Zhang Y."/>
            <person name="Li R."/>
            <person name="Xu Z."/>
            <person name="Li S."/>
            <person name="Li X."/>
            <person name="Zheng H."/>
            <person name="Cong L."/>
            <person name="Lin L."/>
            <person name="Yin J."/>
            <person name="Geng J."/>
            <person name="Li G."/>
            <person name="Shi J."/>
            <person name="Liu J."/>
            <person name="Lv H."/>
            <person name="Li J."/>
            <person name="Wang J."/>
            <person name="Deng Y."/>
            <person name="Ran L."/>
            <person name="Shi X."/>
            <person name="Wang X."/>
            <person name="Wu Q."/>
            <person name="Li C."/>
            <person name="Ren X."/>
            <person name="Wang J."/>
            <person name="Wang X."/>
            <person name="Li D."/>
            <person name="Liu D."/>
            <person name="Zhang X."/>
            <person name="Ji Z."/>
            <person name="Zhao W."/>
            <person name="Sun Y."/>
            <person name="Zhang Z."/>
            <person name="Bao J."/>
            <person name="Han Y."/>
            <person name="Dong L."/>
            <person name="Ji J."/>
            <person name="Chen P."/>
            <person name="Wu S."/>
            <person name="Liu J."/>
            <person name="Xiao Y."/>
            <person name="Bu D."/>
            <person name="Tan J."/>
            <person name="Yang L."/>
            <person name="Ye C."/>
            <person name="Zhang J."/>
            <person name="Xu J."/>
            <person name="Zhou Y."/>
            <person name="Yu Y."/>
            <person name="Zhang B."/>
            <person name="Zhuang S."/>
            <person name="Wei H."/>
            <person name="Liu B."/>
            <person name="Lei M."/>
            <person name="Yu H."/>
            <person name="Li Y."/>
            <person name="Xu H."/>
            <person name="Wei S."/>
            <person name="He X."/>
            <person name="Fang L."/>
            <person name="Zhang Z."/>
            <person name="Zhang Y."/>
            <person name="Huang X."/>
            <person name="Su Z."/>
            <person name="Tong W."/>
            <person name="Li J."/>
            <person name="Tong Z."/>
            <person name="Li S."/>
            <person name="Ye J."/>
            <person name="Wang L."/>
            <person name="Fang L."/>
            <person name="Lei T."/>
            <person name="Chen C.-S."/>
            <person name="Chen H.-C."/>
            <person name="Xu Z."/>
            <person name="Li H."/>
            <person name="Huang H."/>
            <person name="Zhang F."/>
            <person name="Xu H."/>
            <person name="Li N."/>
            <person name="Zhao C."/>
            <person name="Li S."/>
            <person name="Dong L."/>
            <person name="Huang Y."/>
            <person name="Li L."/>
            <person name="Xi Y."/>
            <person name="Qi Q."/>
            <person name="Li W."/>
            <person name="Zhang B."/>
            <person name="Hu W."/>
            <person name="Zhang Y."/>
            <person name="Tian X."/>
            <person name="Jiao Y."/>
            <person name="Liang X."/>
            <person name="Jin J."/>
            <person name="Gao L."/>
            <person name="Zheng W."/>
            <person name="Hao B."/>
            <person name="Liu S.-M."/>
            <person name="Wang W."/>
            <person name="Yuan L."/>
            <person name="Cao M."/>
            <person name="McDermott J."/>
            <person name="Samudrala R."/>
            <person name="Wang J."/>
            <person name="Wong G.K.-S."/>
            <person name="Yang H."/>
        </authorList>
    </citation>
    <scope>NUCLEOTIDE SEQUENCE [LARGE SCALE GENOMIC DNA]</scope>
    <source>
        <strain>cv. Nipponbare</strain>
    </source>
</reference>
<reference key="7">
    <citation type="journal article" date="2003" name="Science">
        <title>Collection, mapping, and annotation of over 28,000 cDNA clones from japonica rice.</title>
        <authorList>
            <consortium name="The rice full-length cDNA consortium"/>
        </authorList>
    </citation>
    <scope>NUCLEOTIDE SEQUENCE [LARGE SCALE MRNA]</scope>
    <source>
        <strain>cv. Nipponbare</strain>
    </source>
</reference>
<reference key="8">
    <citation type="journal article" date="2004" name="Plant Physiol.">
        <title>The GATA family of transcription factors in Arabidopsis and rice.</title>
        <authorList>
            <person name="Reyes J.C."/>
            <person name="Muro-Pastor M.I."/>
            <person name="Florencio F.J."/>
        </authorList>
    </citation>
    <scope>GENE FAMILY</scope>
    <scope>NOMENCLATURE</scope>
</reference>
<sequence>MLHHYYSGGAGHHQDVAAAGSPGDMASSTFSLFFPMSNGQCWPPSTVEESAAYDDHSTVTTSPSSPSSSSTGSVDCTLSLGTPSSRRAEPVAAAAPAANHGAPVPAHYPSLSAATVSWDATAESYYCGQQGRPATGAAKCAAGAGHDALLDRRCANCGTASTPLWRNGPRGPKSLCNACGIRYKKEERRAAATTTTADGAAGCGFITAQRGRGSTAAKAAPAVTTCGEETSPYVVGGGGGGGEVADAAYLAWRLNVVPPAATATAFSVWPERASLYHYN</sequence>
<gene>
    <name evidence="4" type="primary">GATA15</name>
    <name evidence="5" type="synonym">NL1</name>
    <name evidence="10" type="ordered locus">Os05g0578900</name>
    <name evidence="6" type="ordered locus">LOC_Os05g50270</name>
    <name evidence="7" type="ORF">10A19I.2</name>
    <name evidence="8" type="ORF">OJ1126_B10.17</name>
    <name evidence="11" type="ORF">OsJ_19663</name>
    <name evidence="9" type="ORF">OSJNBa0017N18.4</name>
</gene>
<organism>
    <name type="scientific">Oryza sativa subsp. japonica</name>
    <name type="common">Rice</name>
    <dbReference type="NCBI Taxonomy" id="39947"/>
    <lineage>
        <taxon>Eukaryota</taxon>
        <taxon>Viridiplantae</taxon>
        <taxon>Streptophyta</taxon>
        <taxon>Embryophyta</taxon>
        <taxon>Tracheophyta</taxon>
        <taxon>Spermatophyta</taxon>
        <taxon>Magnoliopsida</taxon>
        <taxon>Liliopsida</taxon>
        <taxon>Poales</taxon>
        <taxon>Poaceae</taxon>
        <taxon>BOP clade</taxon>
        <taxon>Oryzoideae</taxon>
        <taxon>Oryzeae</taxon>
        <taxon>Oryzinae</taxon>
        <taxon>Oryza</taxon>
        <taxon>Oryza sativa</taxon>
    </lineage>
</organism>
<protein>
    <recommendedName>
        <fullName evidence="6">GATA transcription factor 15</fullName>
        <shortName evidence="4">OsGATA15</shortName>
    </recommendedName>
    <alternativeName>
        <fullName evidence="5">Protein NECK LEAF 1</fullName>
    </alternativeName>
</protein>
<dbReference type="EMBL" id="DQ784546">
    <property type="protein sequence ID" value="ABG77977.1"/>
    <property type="molecule type" value="mRNA"/>
</dbReference>
<dbReference type="EMBL" id="AC007858">
    <property type="protein sequence ID" value="AAD39588.1"/>
    <property type="status" value="ALT_SEQ"/>
    <property type="molecule type" value="Genomic_DNA"/>
</dbReference>
<dbReference type="EMBL" id="AC098571">
    <property type="protein sequence ID" value="AAT39160.1"/>
    <property type="molecule type" value="Genomic_DNA"/>
</dbReference>
<dbReference type="EMBL" id="AC120988">
    <property type="protein sequence ID" value="AAU10691.1"/>
    <property type="molecule type" value="Genomic_DNA"/>
</dbReference>
<dbReference type="EMBL" id="AP008211">
    <property type="protein sequence ID" value="BAF18329.1"/>
    <property type="molecule type" value="Genomic_DNA"/>
</dbReference>
<dbReference type="EMBL" id="AP014961">
    <property type="protein sequence ID" value="BAS95501.1"/>
    <property type="molecule type" value="Genomic_DNA"/>
</dbReference>
<dbReference type="EMBL" id="CM000142">
    <property type="protein sequence ID" value="EEE64807.1"/>
    <property type="molecule type" value="Genomic_DNA"/>
</dbReference>
<dbReference type="EMBL" id="AK073464">
    <property type="protein sequence ID" value="BAG93465.1"/>
    <property type="molecule type" value="mRNA"/>
</dbReference>
<dbReference type="EMBL" id="AK101287">
    <property type="protein sequence ID" value="BAG94993.1"/>
    <property type="molecule type" value="mRNA"/>
</dbReference>
<dbReference type="RefSeq" id="NP_001389569.1">
    <property type="nucleotide sequence ID" value="NM_001402640.1"/>
</dbReference>
<dbReference type="RefSeq" id="XP_015638999.1">
    <property type="nucleotide sequence ID" value="XM_015783513.1"/>
</dbReference>
<dbReference type="SMR" id="Q6L5E5"/>
<dbReference type="FunCoup" id="Q6L5E5">
    <property type="interactions" value="3"/>
</dbReference>
<dbReference type="STRING" id="39947.Q6L5E5"/>
<dbReference type="PaxDb" id="39947-Q6L5E5"/>
<dbReference type="EnsemblPlants" id="Os05t0578900-01">
    <property type="protein sequence ID" value="Os05t0578900-01"/>
    <property type="gene ID" value="Os05g0578900"/>
</dbReference>
<dbReference type="GeneID" id="4339709"/>
<dbReference type="Gramene" id="Os05t0578900-01">
    <property type="protein sequence ID" value="Os05t0578900-01"/>
    <property type="gene ID" value="Os05g0578900"/>
</dbReference>
<dbReference type="KEGG" id="dosa:Os05g0578900"/>
<dbReference type="eggNOG" id="KOG1601">
    <property type="taxonomic scope" value="Eukaryota"/>
</dbReference>
<dbReference type="HOGENOM" id="CLU_062129_0_0_1"/>
<dbReference type="InParanoid" id="Q6L5E5"/>
<dbReference type="OMA" id="AFAVWPE"/>
<dbReference type="OrthoDB" id="2162994at2759"/>
<dbReference type="Proteomes" id="UP000000763">
    <property type="component" value="Chromosome 5"/>
</dbReference>
<dbReference type="Proteomes" id="UP000007752">
    <property type="component" value="Chromosome 5"/>
</dbReference>
<dbReference type="Proteomes" id="UP000059680">
    <property type="component" value="Chromosome 5"/>
</dbReference>
<dbReference type="GO" id="GO:0043565">
    <property type="term" value="F:sequence-specific DNA binding"/>
    <property type="evidence" value="ECO:0007669"/>
    <property type="project" value="InterPro"/>
</dbReference>
<dbReference type="GO" id="GO:0008270">
    <property type="term" value="F:zinc ion binding"/>
    <property type="evidence" value="ECO:0007669"/>
    <property type="project" value="UniProtKB-KW"/>
</dbReference>
<dbReference type="GO" id="GO:0048437">
    <property type="term" value="P:floral organ development"/>
    <property type="evidence" value="ECO:0000315"/>
    <property type="project" value="UniProtKB"/>
</dbReference>
<dbReference type="GO" id="GO:0006355">
    <property type="term" value="P:regulation of DNA-templated transcription"/>
    <property type="evidence" value="ECO:0007669"/>
    <property type="project" value="InterPro"/>
</dbReference>
<dbReference type="GO" id="GO:0048510">
    <property type="term" value="P:regulation of timing of transition from vegetative to reproductive phase"/>
    <property type="evidence" value="ECO:0000315"/>
    <property type="project" value="UniProtKB"/>
</dbReference>
<dbReference type="CDD" id="cd00202">
    <property type="entry name" value="ZnF_GATA"/>
    <property type="match status" value="1"/>
</dbReference>
<dbReference type="Gene3D" id="3.30.50.10">
    <property type="entry name" value="Erythroid Transcription Factor GATA-1, subunit A"/>
    <property type="match status" value="1"/>
</dbReference>
<dbReference type="InterPro" id="IPR000679">
    <property type="entry name" value="Znf_GATA"/>
</dbReference>
<dbReference type="InterPro" id="IPR013088">
    <property type="entry name" value="Znf_NHR/GATA"/>
</dbReference>
<dbReference type="PANTHER" id="PTHR46813:SF1">
    <property type="entry name" value="GATA TRANSCRIPTION FACTOR 15"/>
    <property type="match status" value="1"/>
</dbReference>
<dbReference type="PANTHER" id="PTHR46813">
    <property type="entry name" value="GATA TRANSCRIPTION FACTOR 18"/>
    <property type="match status" value="1"/>
</dbReference>
<dbReference type="Pfam" id="PF00320">
    <property type="entry name" value="GATA"/>
    <property type="match status" value="1"/>
</dbReference>
<dbReference type="SMART" id="SM00401">
    <property type="entry name" value="ZnF_GATA"/>
    <property type="match status" value="1"/>
</dbReference>
<dbReference type="SUPFAM" id="SSF57716">
    <property type="entry name" value="Glucocorticoid receptor-like (DNA-binding domain)"/>
    <property type="match status" value="1"/>
</dbReference>
<dbReference type="PROSITE" id="PS00344">
    <property type="entry name" value="GATA_ZN_FINGER_1"/>
    <property type="match status" value="1"/>
</dbReference>
<dbReference type="PROSITE" id="PS50114">
    <property type="entry name" value="GATA_ZN_FINGER_2"/>
    <property type="match status" value="1"/>
</dbReference>
<evidence type="ECO:0000255" key="1">
    <source>
        <dbReference type="PROSITE-ProRule" id="PRU00094"/>
    </source>
</evidence>
<evidence type="ECO:0000256" key="2">
    <source>
        <dbReference type="SAM" id="MobiDB-lite"/>
    </source>
</evidence>
<evidence type="ECO:0000269" key="3">
    <source>
    </source>
</evidence>
<evidence type="ECO:0000303" key="4">
    <source>
    </source>
</evidence>
<evidence type="ECO:0000303" key="5">
    <source>
    </source>
</evidence>
<evidence type="ECO:0000305" key="6"/>
<evidence type="ECO:0000312" key="7">
    <source>
        <dbReference type="EMBL" id="AAD39588.1"/>
    </source>
</evidence>
<evidence type="ECO:0000312" key="8">
    <source>
        <dbReference type="EMBL" id="AAT39160.1"/>
    </source>
</evidence>
<evidence type="ECO:0000312" key="9">
    <source>
        <dbReference type="EMBL" id="AAU10691.1"/>
    </source>
</evidence>
<evidence type="ECO:0000312" key="10">
    <source>
        <dbReference type="EMBL" id="BAS95501.1"/>
    </source>
</evidence>
<evidence type="ECO:0000312" key="11">
    <source>
        <dbReference type="EMBL" id="EEE64807.1"/>
    </source>
</evidence>
<feature type="chain" id="PRO_0000439005" description="GATA transcription factor 15">
    <location>
        <begin position="1"/>
        <end position="279"/>
    </location>
</feature>
<feature type="zinc finger region" description="GATA-type" evidence="1">
    <location>
        <begin position="154"/>
        <end position="179"/>
    </location>
</feature>
<feature type="region of interest" description="Disordered" evidence="2">
    <location>
        <begin position="52"/>
        <end position="94"/>
    </location>
</feature>
<feature type="compositionally biased region" description="Low complexity" evidence="2">
    <location>
        <begin position="58"/>
        <end position="74"/>
    </location>
</feature>
<feature type="mutagenesis site" description="In nl1-2; reduced plant size. Delayed transition from vegetative to reproductive growth. Reduced panicle size with overgrown bracts at their bases." evidence="3">
    <original>R</original>
    <variation>G</variation>
    <location>
        <position position="182"/>
    </location>
</feature>
<feature type="sequence conflict" description="In Ref. 2; AAD39588." evidence="6" ref="2">
    <original>D</original>
    <variation>N</variation>
    <location>
        <position position="246"/>
    </location>
</feature>
<feature type="sequence conflict" description="In Ref. 2; AAD39588." evidence="6" ref="2">
    <original>L</original>
    <variation>V</variation>
    <location>
        <position position="275"/>
    </location>
</feature>
<proteinExistence type="evidence at protein level"/>
<keyword id="KW-0238">DNA-binding</keyword>
<keyword id="KW-0287">Flowering</keyword>
<keyword id="KW-0479">Metal-binding</keyword>
<keyword id="KW-1185">Reference proteome</keyword>
<keyword id="KW-0804">Transcription</keyword>
<keyword id="KW-0805">Transcription regulation</keyword>
<keyword id="KW-0862">Zinc</keyword>
<keyword id="KW-0863">Zinc-finger</keyword>